<accession>B0YCA6</accession>
<sequence>MPAPTTTLLIEGSFTELADEFAQYIDALRKNEGASLQSEVAPLIEPLRQQEQSEEEPDRKQRDEVLKKLVGAAAVLNAAPEREIISAYNLLVHLVHQASNPDIFLSRICTYLAKPITTSPQFGPTLAISILTTIFNTLAPTDSSRFHVLLAIVAVIRQSGSSYAFEALKPQLAAQLPTWLSAWELDDEDAQKLHLAIADAAQASGDLELAQTHVVQALQTIPANESSSKEARDLAVRALTSALKSPAVFDFTSLTAADAIQALRSSDSTLFELLEIFTADTLDAYEDFIAATPLETISGGVLVDGAEALQTKMRLLTLASLAASTPSRSLPYTTIASALRVPVEDVEKWVIDTIRAGLVEGKLSQLRSEFLVHRATYRVFGEKQWAEVQGRLMVWRRSLESVLGVLRTERERYIRESMQAAAEEVGQGKSGDKGAKGGDRRRNPQQQQQSQPSQPQQAREVELVGGAE</sequence>
<gene>
    <name type="ORF">AFUB_089510</name>
</gene>
<dbReference type="EMBL" id="DS499601">
    <property type="protein sequence ID" value="EDP48237.1"/>
    <property type="molecule type" value="Genomic_DNA"/>
</dbReference>
<dbReference type="SMR" id="B0YCA6"/>
<dbReference type="EnsemblFungi" id="EDP48237">
    <property type="protein sequence ID" value="EDP48237"/>
    <property type="gene ID" value="AFUB_089510"/>
</dbReference>
<dbReference type="VEuPathDB" id="FungiDB:AFUB_089510"/>
<dbReference type="HOGENOM" id="CLU_035254_0_1_1"/>
<dbReference type="OrthoDB" id="113254at5052"/>
<dbReference type="PhylomeDB" id="B0YCA6"/>
<dbReference type="Proteomes" id="UP000001699">
    <property type="component" value="Unassembled WGS sequence"/>
</dbReference>
<dbReference type="GO" id="GO:0016282">
    <property type="term" value="C:eukaryotic 43S preinitiation complex"/>
    <property type="evidence" value="ECO:0007669"/>
    <property type="project" value="UniProtKB-UniRule"/>
</dbReference>
<dbReference type="GO" id="GO:0033290">
    <property type="term" value="C:eukaryotic 48S preinitiation complex"/>
    <property type="evidence" value="ECO:0007669"/>
    <property type="project" value="UniProtKB-UniRule"/>
</dbReference>
<dbReference type="GO" id="GO:0071541">
    <property type="term" value="C:eukaryotic translation initiation factor 3 complex, eIF3m"/>
    <property type="evidence" value="ECO:0007669"/>
    <property type="project" value="UniProtKB-UniRule"/>
</dbReference>
<dbReference type="GO" id="GO:0003743">
    <property type="term" value="F:translation initiation factor activity"/>
    <property type="evidence" value="ECO:0007669"/>
    <property type="project" value="UniProtKB-UniRule"/>
</dbReference>
<dbReference type="GO" id="GO:0001732">
    <property type="term" value="P:formation of cytoplasmic translation initiation complex"/>
    <property type="evidence" value="ECO:0007669"/>
    <property type="project" value="UniProtKB-UniRule"/>
</dbReference>
<dbReference type="HAMAP" id="MF_03012">
    <property type="entry name" value="eIF3m"/>
    <property type="match status" value="1"/>
</dbReference>
<dbReference type="InterPro" id="IPR045237">
    <property type="entry name" value="COPS7/eIF3m"/>
</dbReference>
<dbReference type="InterPro" id="IPR027528">
    <property type="entry name" value="eIF3m"/>
</dbReference>
<dbReference type="InterPro" id="IPR040750">
    <property type="entry name" value="eIF3m_C_helix"/>
</dbReference>
<dbReference type="InterPro" id="IPR000717">
    <property type="entry name" value="PCI_dom"/>
</dbReference>
<dbReference type="PANTHER" id="PTHR15350">
    <property type="entry name" value="COP9 SIGNALOSOME COMPLEX SUBUNIT 7/DENDRITIC CELL PROTEIN GA17"/>
    <property type="match status" value="1"/>
</dbReference>
<dbReference type="PANTHER" id="PTHR15350:SF2">
    <property type="entry name" value="EUKARYOTIC TRANSLATION INITIATION FACTOR 3 SUBUNIT M"/>
    <property type="match status" value="1"/>
</dbReference>
<dbReference type="Pfam" id="PF18005">
    <property type="entry name" value="eIF3m_C_helix"/>
    <property type="match status" value="1"/>
</dbReference>
<dbReference type="Pfam" id="PF01399">
    <property type="entry name" value="PCI"/>
    <property type="match status" value="1"/>
</dbReference>
<dbReference type="SMART" id="SM00088">
    <property type="entry name" value="PINT"/>
    <property type="match status" value="1"/>
</dbReference>
<dbReference type="PROSITE" id="PS50250">
    <property type="entry name" value="PCI"/>
    <property type="match status" value="1"/>
</dbReference>
<keyword id="KW-0963">Cytoplasm</keyword>
<keyword id="KW-0396">Initiation factor</keyword>
<keyword id="KW-0648">Protein biosynthesis</keyword>
<organism>
    <name type="scientific">Aspergillus fumigatus (strain CBS 144.89 / FGSC A1163 / CEA10)</name>
    <name type="common">Neosartorya fumigata</name>
    <dbReference type="NCBI Taxonomy" id="451804"/>
    <lineage>
        <taxon>Eukaryota</taxon>
        <taxon>Fungi</taxon>
        <taxon>Dikarya</taxon>
        <taxon>Ascomycota</taxon>
        <taxon>Pezizomycotina</taxon>
        <taxon>Eurotiomycetes</taxon>
        <taxon>Eurotiomycetidae</taxon>
        <taxon>Eurotiales</taxon>
        <taxon>Aspergillaceae</taxon>
        <taxon>Aspergillus</taxon>
        <taxon>Aspergillus subgen. Fumigati</taxon>
    </lineage>
</organism>
<protein>
    <recommendedName>
        <fullName evidence="1">Eukaryotic translation initiation factor 3 subunit M</fullName>
        <shortName evidence="1">eIF3m</shortName>
    </recommendedName>
</protein>
<proteinExistence type="inferred from homology"/>
<evidence type="ECO:0000255" key="1">
    <source>
        <dbReference type="HAMAP-Rule" id="MF_03012"/>
    </source>
</evidence>
<evidence type="ECO:0000255" key="2">
    <source>
        <dbReference type="PROSITE-ProRule" id="PRU01185"/>
    </source>
</evidence>
<evidence type="ECO:0000256" key="3">
    <source>
        <dbReference type="SAM" id="MobiDB-lite"/>
    </source>
</evidence>
<feature type="chain" id="PRO_0000366012" description="Eukaryotic translation initiation factor 3 subunit M">
    <location>
        <begin position="1"/>
        <end position="468"/>
    </location>
</feature>
<feature type="domain" description="PCI" evidence="2">
    <location>
        <begin position="206"/>
        <end position="377"/>
    </location>
</feature>
<feature type="region of interest" description="Disordered" evidence="3">
    <location>
        <begin position="40"/>
        <end position="61"/>
    </location>
</feature>
<feature type="region of interest" description="Disordered" evidence="3">
    <location>
        <begin position="419"/>
        <end position="468"/>
    </location>
</feature>
<feature type="compositionally biased region" description="Basic and acidic residues" evidence="3">
    <location>
        <begin position="430"/>
        <end position="442"/>
    </location>
</feature>
<feature type="compositionally biased region" description="Low complexity" evidence="3">
    <location>
        <begin position="444"/>
        <end position="457"/>
    </location>
</feature>
<comment type="function">
    <text evidence="1">Component of the eukaryotic translation initiation factor 3 (eIF-3) complex, which is involved in protein synthesis of a specialized repertoire of mRNAs and, together with other initiation factors, stimulates binding of mRNA and methionyl-tRNAi to the 40S ribosome. The eIF-3 complex specifically targets and initiates translation of a subset of mRNAs involved in cell proliferation.</text>
</comment>
<comment type="subunit">
    <text evidence="1">Component of the eukaryotic translation initiation factor 3 (eIF-3) complex.</text>
</comment>
<comment type="subcellular location">
    <subcellularLocation>
        <location evidence="1">Cytoplasm</location>
    </subcellularLocation>
</comment>
<comment type="similarity">
    <text evidence="1">Belongs to the eIF-3 subunit M family.</text>
</comment>
<name>EIF3M_ASPFC</name>
<reference key="1">
    <citation type="journal article" date="2008" name="PLoS Genet.">
        <title>Genomic islands in the pathogenic filamentous fungus Aspergillus fumigatus.</title>
        <authorList>
            <person name="Fedorova N.D."/>
            <person name="Khaldi N."/>
            <person name="Joardar V.S."/>
            <person name="Maiti R."/>
            <person name="Amedeo P."/>
            <person name="Anderson M.J."/>
            <person name="Crabtree J."/>
            <person name="Silva J.C."/>
            <person name="Badger J.H."/>
            <person name="Albarraq A."/>
            <person name="Angiuoli S."/>
            <person name="Bussey H."/>
            <person name="Bowyer P."/>
            <person name="Cotty P.J."/>
            <person name="Dyer P.S."/>
            <person name="Egan A."/>
            <person name="Galens K."/>
            <person name="Fraser-Liggett C.M."/>
            <person name="Haas B.J."/>
            <person name="Inman J.M."/>
            <person name="Kent R."/>
            <person name="Lemieux S."/>
            <person name="Malavazi I."/>
            <person name="Orvis J."/>
            <person name="Roemer T."/>
            <person name="Ronning C.M."/>
            <person name="Sundaram J.P."/>
            <person name="Sutton G."/>
            <person name="Turner G."/>
            <person name="Venter J.C."/>
            <person name="White O.R."/>
            <person name="Whitty B.R."/>
            <person name="Youngman P."/>
            <person name="Wolfe K.H."/>
            <person name="Goldman G.H."/>
            <person name="Wortman J.R."/>
            <person name="Jiang B."/>
            <person name="Denning D.W."/>
            <person name="Nierman W.C."/>
        </authorList>
    </citation>
    <scope>NUCLEOTIDE SEQUENCE [LARGE SCALE GENOMIC DNA]</scope>
    <source>
        <strain>CBS 144.89 / FGSC A1163 / CEA10</strain>
    </source>
</reference>